<feature type="chain" id="PRO_0000128661" description="Polyphosphate kinase">
    <location>
        <begin position="1"/>
        <end position="746"/>
    </location>
</feature>
<feature type="region of interest" description="Disordered" evidence="2">
    <location>
        <begin position="1"/>
        <end position="60"/>
    </location>
</feature>
<feature type="compositionally biased region" description="Polar residues" evidence="2">
    <location>
        <begin position="1"/>
        <end position="17"/>
    </location>
</feature>
<feature type="compositionally biased region" description="Acidic residues" evidence="2">
    <location>
        <begin position="37"/>
        <end position="53"/>
    </location>
</feature>
<feature type="active site" description="Phosphohistidine intermediate" evidence="1">
    <location>
        <position position="489"/>
    </location>
</feature>
<feature type="binding site" evidence="1">
    <location>
        <position position="102"/>
    </location>
    <ligand>
        <name>ATP</name>
        <dbReference type="ChEBI" id="CHEBI:30616"/>
    </ligand>
</feature>
<feature type="binding site" evidence="1">
    <location>
        <position position="429"/>
    </location>
    <ligand>
        <name>Mg(2+)</name>
        <dbReference type="ChEBI" id="CHEBI:18420"/>
    </ligand>
</feature>
<feature type="binding site" evidence="1">
    <location>
        <position position="459"/>
    </location>
    <ligand>
        <name>Mg(2+)</name>
        <dbReference type="ChEBI" id="CHEBI:18420"/>
    </ligand>
</feature>
<feature type="binding site" evidence="1">
    <location>
        <position position="522"/>
    </location>
    <ligand>
        <name>ATP</name>
        <dbReference type="ChEBI" id="CHEBI:30616"/>
    </ligand>
</feature>
<feature type="binding site" evidence="1">
    <location>
        <position position="618"/>
    </location>
    <ligand>
        <name>ATP</name>
        <dbReference type="ChEBI" id="CHEBI:30616"/>
    </ligand>
</feature>
<feature type="binding site" evidence="1">
    <location>
        <position position="646"/>
    </location>
    <ligand>
        <name>ATP</name>
        <dbReference type="ChEBI" id="CHEBI:30616"/>
    </ligand>
</feature>
<proteinExistence type="inferred from homology"/>
<protein>
    <recommendedName>
        <fullName evidence="1">Polyphosphate kinase</fullName>
        <ecNumber evidence="1">2.7.4.1</ecNumber>
    </recommendedName>
    <alternativeName>
        <fullName evidence="1">ATP-polyphosphate phosphotransferase</fullName>
    </alternativeName>
    <alternativeName>
        <fullName evidence="1">Polyphosphoric acid kinase</fullName>
    </alternativeName>
</protein>
<gene>
    <name evidence="1" type="primary">ppk</name>
    <name type="ordered locus">SCO4145</name>
    <name type="ORF">SCD84.12c</name>
</gene>
<keyword id="KW-0067">ATP-binding</keyword>
<keyword id="KW-0418">Kinase</keyword>
<keyword id="KW-0460">Magnesium</keyword>
<keyword id="KW-0479">Metal-binding</keyword>
<keyword id="KW-0547">Nucleotide-binding</keyword>
<keyword id="KW-0597">Phosphoprotein</keyword>
<keyword id="KW-1185">Reference proteome</keyword>
<keyword id="KW-0808">Transferase</keyword>
<organism>
    <name type="scientific">Streptomyces coelicolor (strain ATCC BAA-471 / A3(2) / M145)</name>
    <dbReference type="NCBI Taxonomy" id="100226"/>
    <lineage>
        <taxon>Bacteria</taxon>
        <taxon>Bacillati</taxon>
        <taxon>Actinomycetota</taxon>
        <taxon>Actinomycetes</taxon>
        <taxon>Kitasatosporales</taxon>
        <taxon>Streptomycetaceae</taxon>
        <taxon>Streptomyces</taxon>
        <taxon>Streptomyces albidoflavus group</taxon>
    </lineage>
</organism>
<name>PPK1_STRCO</name>
<accession>Q9KZV6</accession>
<sequence>MRQPNTQAEAQHTQPSVGSIAAHRPNTVAATVSGLEPDIDADLDAYEESEESQDGGARLPQGRFLDRERSWLAFNERVLELAEDPSTPLLERANFLAIFASNLDEFFMVRVAGLKRRIATGVATRSASGLQPREVLEMIWARSRELMARHAACFHEDVAPALAEEGIHLVRWSELAEKEQARLFTLFRHRIFPVLTPLAVDPAHPFPYISGLSLNLAVVVRNPVTGHRHFARVKVPPLLSRFLEASPGRYVPVEDVIAAHLEELFPGMEVLEHHTFRLTRNEDLEVEEDDAENLLQALEKELMRRRLGPPVRLEVEESVDREVLDLLVRELKIGEAEVYPLPGPLDLTGLFRIHSIDRPELKYPKFVAGTHRDLAEVESASAPDIFAALRTKDVLLHHPYDSFSTSVQAFLEQAAADPDVLAIKQTLYRTSGDSPIVDALIEAAESGKQVLVLVEIKARFDESANIKWARKLEESGCHVVYGLVGLKTHCKLSLVVRQEGETLRRYSHVGTGNYHPKTARLYEDLGLLTSDPQVGADLSDLFNRLSGYSRRETYRRLLVAPKSLRDGLVSRIHKEIQHHRAGRPAHVRIKVNSMVDEAVVDACYRASQAGVPVDVWVRGICALRPGVPGLSENIRVRSVLGRFLEHSRVFAFGNGGEPEVWLGSADMMHRNLDRRIEALVRVTDPAHRAALNRLLENGMSDGTASWHLGPDGEWTRHATDADGQPLRNIQEMLIDARRRRRGTATP</sequence>
<dbReference type="EC" id="2.7.4.1" evidence="1"/>
<dbReference type="EMBL" id="AL939119">
    <property type="protein sequence ID" value="CAB88478.1"/>
    <property type="status" value="ALT_INIT"/>
    <property type="molecule type" value="Genomic_DNA"/>
</dbReference>
<dbReference type="RefSeq" id="NP_628322.1">
    <property type="nucleotide sequence ID" value="NC_003888.3"/>
</dbReference>
<dbReference type="SMR" id="Q9KZV6"/>
<dbReference type="FunCoup" id="Q9KZV6">
    <property type="interactions" value="65"/>
</dbReference>
<dbReference type="STRING" id="100226.gene:17761789"/>
<dbReference type="PaxDb" id="100226-SCO4145"/>
<dbReference type="KEGG" id="sco:SCO4145"/>
<dbReference type="PATRIC" id="fig|100226.15.peg.4209"/>
<dbReference type="eggNOG" id="COG0855">
    <property type="taxonomic scope" value="Bacteria"/>
</dbReference>
<dbReference type="HOGENOM" id="CLU_009678_5_0_11"/>
<dbReference type="InParanoid" id="Q9KZV6"/>
<dbReference type="OrthoDB" id="9761456at2"/>
<dbReference type="PhylomeDB" id="Q9KZV6"/>
<dbReference type="Proteomes" id="UP000001973">
    <property type="component" value="Chromosome"/>
</dbReference>
<dbReference type="GO" id="GO:0016020">
    <property type="term" value="C:membrane"/>
    <property type="evidence" value="ECO:0000318"/>
    <property type="project" value="GO_Central"/>
</dbReference>
<dbReference type="GO" id="GO:0009358">
    <property type="term" value="C:polyphosphate kinase complex"/>
    <property type="evidence" value="ECO:0007669"/>
    <property type="project" value="InterPro"/>
</dbReference>
<dbReference type="GO" id="GO:0005524">
    <property type="term" value="F:ATP binding"/>
    <property type="evidence" value="ECO:0007669"/>
    <property type="project" value="UniProtKB-KW"/>
</dbReference>
<dbReference type="GO" id="GO:0046872">
    <property type="term" value="F:metal ion binding"/>
    <property type="evidence" value="ECO:0007669"/>
    <property type="project" value="UniProtKB-KW"/>
</dbReference>
<dbReference type="GO" id="GO:0008976">
    <property type="term" value="F:polyphosphate kinase activity"/>
    <property type="evidence" value="ECO:0000318"/>
    <property type="project" value="GO_Central"/>
</dbReference>
<dbReference type="GO" id="GO:0006799">
    <property type="term" value="P:polyphosphate biosynthetic process"/>
    <property type="evidence" value="ECO:0000318"/>
    <property type="project" value="GO_Central"/>
</dbReference>
<dbReference type="CDD" id="cd09165">
    <property type="entry name" value="PLDc_PaPPK1_C1_like"/>
    <property type="match status" value="1"/>
</dbReference>
<dbReference type="CDD" id="cd09168">
    <property type="entry name" value="PLDc_PaPPK1_C2_like"/>
    <property type="match status" value="1"/>
</dbReference>
<dbReference type="FunFam" id="3.30.870.10:FF:000001">
    <property type="entry name" value="Polyphosphate kinase"/>
    <property type="match status" value="1"/>
</dbReference>
<dbReference type="Gene3D" id="3.30.870.10">
    <property type="entry name" value="Endonuclease Chain A"/>
    <property type="match status" value="2"/>
</dbReference>
<dbReference type="Gene3D" id="3.30.1840.10">
    <property type="entry name" value="Polyphosphate kinase middle domain"/>
    <property type="match status" value="1"/>
</dbReference>
<dbReference type="Gene3D" id="1.20.58.310">
    <property type="entry name" value="Polyphosphate kinase N-terminal domain"/>
    <property type="match status" value="1"/>
</dbReference>
<dbReference type="HAMAP" id="MF_00347">
    <property type="entry name" value="Polyphosphate_kinase"/>
    <property type="match status" value="1"/>
</dbReference>
<dbReference type="InterPro" id="IPR003414">
    <property type="entry name" value="PP_kinase"/>
</dbReference>
<dbReference type="InterPro" id="IPR041108">
    <property type="entry name" value="PP_kinase_C_1"/>
</dbReference>
<dbReference type="InterPro" id="IPR024953">
    <property type="entry name" value="PP_kinase_middle"/>
</dbReference>
<dbReference type="InterPro" id="IPR036830">
    <property type="entry name" value="PP_kinase_middle_dom_sf"/>
</dbReference>
<dbReference type="InterPro" id="IPR025200">
    <property type="entry name" value="PPK_C_dom2"/>
</dbReference>
<dbReference type="InterPro" id="IPR025198">
    <property type="entry name" value="PPK_N_dom"/>
</dbReference>
<dbReference type="InterPro" id="IPR036832">
    <property type="entry name" value="PPK_N_dom_sf"/>
</dbReference>
<dbReference type="NCBIfam" id="TIGR03705">
    <property type="entry name" value="poly_P_kin"/>
    <property type="match status" value="1"/>
</dbReference>
<dbReference type="NCBIfam" id="NF003917">
    <property type="entry name" value="PRK05443.1-1"/>
    <property type="match status" value="1"/>
</dbReference>
<dbReference type="NCBIfam" id="NF003918">
    <property type="entry name" value="PRK05443.1-2"/>
    <property type="match status" value="1"/>
</dbReference>
<dbReference type="NCBIfam" id="NF003921">
    <property type="entry name" value="PRK05443.2-2"/>
    <property type="match status" value="1"/>
</dbReference>
<dbReference type="NCBIfam" id="NF003922">
    <property type="entry name" value="PRK05443.2-3"/>
    <property type="match status" value="1"/>
</dbReference>
<dbReference type="PANTHER" id="PTHR30218">
    <property type="entry name" value="POLYPHOSPHATE KINASE"/>
    <property type="match status" value="1"/>
</dbReference>
<dbReference type="PANTHER" id="PTHR30218:SF0">
    <property type="entry name" value="POLYPHOSPHATE KINASE"/>
    <property type="match status" value="1"/>
</dbReference>
<dbReference type="Pfam" id="PF02503">
    <property type="entry name" value="PP_kinase"/>
    <property type="match status" value="1"/>
</dbReference>
<dbReference type="Pfam" id="PF13090">
    <property type="entry name" value="PP_kinase_C"/>
    <property type="match status" value="1"/>
</dbReference>
<dbReference type="Pfam" id="PF17941">
    <property type="entry name" value="PP_kinase_C_1"/>
    <property type="match status" value="1"/>
</dbReference>
<dbReference type="Pfam" id="PF13089">
    <property type="entry name" value="PP_kinase_N"/>
    <property type="match status" value="1"/>
</dbReference>
<dbReference type="PIRSF" id="PIRSF015589">
    <property type="entry name" value="PP_kinase"/>
    <property type="match status" value="1"/>
</dbReference>
<dbReference type="SUPFAM" id="SSF56024">
    <property type="entry name" value="Phospholipase D/nuclease"/>
    <property type="match status" value="2"/>
</dbReference>
<dbReference type="SUPFAM" id="SSF143724">
    <property type="entry name" value="PHP14-like"/>
    <property type="match status" value="1"/>
</dbReference>
<dbReference type="SUPFAM" id="SSF140356">
    <property type="entry name" value="PPK N-terminal domain-like"/>
    <property type="match status" value="1"/>
</dbReference>
<comment type="function">
    <text evidence="1">Catalyzes the reversible transfer of the terminal phosphate of ATP to form a long-chain polyphosphate (polyP).</text>
</comment>
<comment type="catalytic activity">
    <reaction evidence="1">
        <text>[phosphate](n) + ATP = [phosphate](n+1) + ADP</text>
        <dbReference type="Rhea" id="RHEA:19573"/>
        <dbReference type="Rhea" id="RHEA-COMP:9859"/>
        <dbReference type="Rhea" id="RHEA-COMP:14280"/>
        <dbReference type="ChEBI" id="CHEBI:16838"/>
        <dbReference type="ChEBI" id="CHEBI:30616"/>
        <dbReference type="ChEBI" id="CHEBI:456216"/>
        <dbReference type="EC" id="2.7.4.1"/>
    </reaction>
</comment>
<comment type="cofactor">
    <cofactor evidence="1">
        <name>Mg(2+)</name>
        <dbReference type="ChEBI" id="CHEBI:18420"/>
    </cofactor>
</comment>
<comment type="PTM">
    <text evidence="1">An intermediate of this reaction is the autophosphorylated ppk in which a phosphate is covalently linked to a histidine residue through a N-P bond.</text>
</comment>
<comment type="similarity">
    <text evidence="1">Belongs to the polyphosphate kinase 1 (PPK1) family.</text>
</comment>
<comment type="sequence caution" evidence="3">
    <conflict type="erroneous initiation">
        <sequence resource="EMBL-CDS" id="CAB88478"/>
    </conflict>
</comment>
<reference key="1">
    <citation type="journal article" date="2002" name="Nature">
        <title>Complete genome sequence of the model actinomycete Streptomyces coelicolor A3(2).</title>
        <authorList>
            <person name="Bentley S.D."/>
            <person name="Chater K.F."/>
            <person name="Cerdeno-Tarraga A.-M."/>
            <person name="Challis G.L."/>
            <person name="Thomson N.R."/>
            <person name="James K.D."/>
            <person name="Harris D.E."/>
            <person name="Quail M.A."/>
            <person name="Kieser H."/>
            <person name="Harper D."/>
            <person name="Bateman A."/>
            <person name="Brown S."/>
            <person name="Chandra G."/>
            <person name="Chen C.W."/>
            <person name="Collins M."/>
            <person name="Cronin A."/>
            <person name="Fraser A."/>
            <person name="Goble A."/>
            <person name="Hidalgo J."/>
            <person name="Hornsby T."/>
            <person name="Howarth S."/>
            <person name="Huang C.-H."/>
            <person name="Kieser T."/>
            <person name="Larke L."/>
            <person name="Murphy L.D."/>
            <person name="Oliver K."/>
            <person name="O'Neil S."/>
            <person name="Rabbinowitsch E."/>
            <person name="Rajandream M.A."/>
            <person name="Rutherford K.M."/>
            <person name="Rutter S."/>
            <person name="Seeger K."/>
            <person name="Saunders D."/>
            <person name="Sharp S."/>
            <person name="Squares R."/>
            <person name="Squares S."/>
            <person name="Taylor K."/>
            <person name="Warren T."/>
            <person name="Wietzorrek A."/>
            <person name="Woodward J.R."/>
            <person name="Barrell B.G."/>
            <person name="Parkhill J."/>
            <person name="Hopwood D.A."/>
        </authorList>
    </citation>
    <scope>NUCLEOTIDE SEQUENCE [LARGE SCALE GENOMIC DNA]</scope>
    <source>
        <strain>ATCC BAA-471 / A3(2) / M145</strain>
    </source>
</reference>
<evidence type="ECO:0000255" key="1">
    <source>
        <dbReference type="HAMAP-Rule" id="MF_00347"/>
    </source>
</evidence>
<evidence type="ECO:0000256" key="2">
    <source>
        <dbReference type="SAM" id="MobiDB-lite"/>
    </source>
</evidence>
<evidence type="ECO:0000305" key="3"/>